<proteinExistence type="evidence at transcript level"/>
<organism>
    <name type="scientific">Plasmodium knowlesi</name>
    <dbReference type="NCBI Taxonomy" id="5850"/>
    <lineage>
        <taxon>Eukaryota</taxon>
        <taxon>Sar</taxon>
        <taxon>Alveolata</taxon>
        <taxon>Apicomplexa</taxon>
        <taxon>Aconoidasida</taxon>
        <taxon>Haemosporida</taxon>
        <taxon>Plasmodiidae</taxon>
        <taxon>Plasmodium</taxon>
        <taxon>Plasmodium (Plasmodium)</taxon>
    </lineage>
</organism>
<feature type="chain" id="PRO_0000385359" description="Putative chloroquine resistance transporter">
    <location>
        <begin position="1"/>
        <end position="424"/>
    </location>
</feature>
<feature type="topological domain" description="Cytoplasmic" evidence="4">
    <location>
        <begin position="1"/>
        <end position="57"/>
    </location>
</feature>
<feature type="transmembrane region" description="Helical" evidence="3">
    <location>
        <begin position="58"/>
        <end position="78"/>
    </location>
</feature>
<feature type="topological domain" description="Vacuolar" evidence="4">
    <location>
        <begin position="79"/>
        <end position="89"/>
    </location>
</feature>
<feature type="transmembrane region" description="Helical" evidence="3">
    <location>
        <begin position="90"/>
        <end position="110"/>
    </location>
</feature>
<feature type="topological domain" description="Cytoplasmic" evidence="4">
    <location>
        <begin position="111"/>
        <end position="124"/>
    </location>
</feature>
<feature type="transmembrane region" description="Helical" evidence="3">
    <location>
        <begin position="125"/>
        <end position="145"/>
    </location>
</feature>
<feature type="topological domain" description="Vacuolar" evidence="4">
    <location>
        <begin position="146"/>
        <end position="153"/>
    </location>
</feature>
<feature type="transmembrane region" description="Helical" evidence="3">
    <location>
        <begin position="154"/>
        <end position="174"/>
    </location>
</feature>
<feature type="topological domain" description="Cytoplasmic" evidence="4">
    <location>
        <begin position="175"/>
        <end position="179"/>
    </location>
</feature>
<feature type="transmembrane region" description="Helical" evidence="3">
    <location>
        <begin position="180"/>
        <end position="200"/>
    </location>
</feature>
<feature type="topological domain" description="Vacuolar" evidence="4">
    <location>
        <begin position="201"/>
        <end position="208"/>
    </location>
</feature>
<feature type="transmembrane region" description="Helical" evidence="3">
    <location>
        <begin position="209"/>
        <end position="229"/>
    </location>
</feature>
<feature type="topological domain" description="Cytoplasmic" evidence="4">
    <location>
        <begin position="230"/>
        <end position="246"/>
    </location>
</feature>
<feature type="transmembrane region" description="Helical" evidence="3">
    <location>
        <begin position="247"/>
        <end position="267"/>
    </location>
</feature>
<feature type="topological domain" description="Vacuolar" evidence="4">
    <location>
        <begin position="268"/>
        <end position="316"/>
    </location>
</feature>
<feature type="transmembrane region" description="Helical" evidence="3">
    <location>
        <begin position="317"/>
        <end position="337"/>
    </location>
</feature>
<feature type="topological domain" description="Cytoplasmic" evidence="4">
    <location>
        <begin position="338"/>
        <end position="345"/>
    </location>
</feature>
<feature type="transmembrane region" description="Helical" evidence="3">
    <location>
        <begin position="346"/>
        <end position="366"/>
    </location>
</feature>
<feature type="topological domain" description="Vacuolar" evidence="4">
    <location>
        <begin position="367"/>
        <end position="376"/>
    </location>
</feature>
<feature type="transmembrane region" description="Helical" evidence="3">
    <location>
        <begin position="377"/>
        <end position="397"/>
    </location>
</feature>
<feature type="topological domain" description="Cytoplasmic" evidence="4">
    <location>
        <begin position="398"/>
        <end position="424"/>
    </location>
</feature>
<feature type="glycosylation site" description="N-linked (GlcNAc...) asparagine" evidence="3">
    <location>
        <position position="87"/>
    </location>
</feature>
<feature type="disulfide bond" evidence="2">
    <location>
        <begin position="288"/>
        <end position="311"/>
    </location>
</feature>
<feature type="disulfide bond" evidence="2">
    <location>
        <begin position="300"/>
        <end position="308"/>
    </location>
</feature>
<accession>Q9GSD7</accession>
<sequence>MKILKKKKKGNQQIVPDERYRELDSHAPNENEIADEAPMSRKILYYLKLVYHEIRENITIYLLIILYLCVCVMNKIMAKRTLKKIGNYSFVTSETHNTICMVVFFSLYFIFGRRVTSAKERHQNFGLQFLLISLLDACSVIIAFIGLTRTTGNIQSFVMQLSIPINMFFCFLILRYRYHLFNYVGASIIVLTIAIVEFILSFETQEENSIVFNLVLIASLIPMSFSNMTREIVFKKYKINILRLNAVVSFFQIFTSCLMLPMYTLPFLKQINLPFSEIGTNIKNGFRCLILGQNTIVENCGLGMAKMCDDCEGAWKTFLAYSFFNICDNLITSFIIDKFSTMTYTIVSCIQGPAIAIAYYFKFLAGDAVMKPRVLDFVTLFGYLFGSIIYRVGNIILEKKKMMEAGNDDDSEGELTNAESIITQ</sequence>
<dbReference type="EMBL" id="AF314646">
    <property type="protein sequence ID" value="AAG27735.1"/>
    <property type="molecule type" value="mRNA"/>
</dbReference>
<dbReference type="SMR" id="Q9GSD7"/>
<dbReference type="GlyCosmos" id="Q9GSD7">
    <property type="glycosylation" value="1 site, No reported glycans"/>
</dbReference>
<dbReference type="VEuPathDB" id="PlasmoDB:PKA1H_010012400"/>
<dbReference type="VEuPathDB" id="PlasmoDB:PKNH_0107600"/>
<dbReference type="VEuPathDB" id="PlasmoDB:PKNOH_S01015900"/>
<dbReference type="GO" id="GO:0005774">
    <property type="term" value="C:vacuolar membrane"/>
    <property type="evidence" value="ECO:0007669"/>
    <property type="project" value="UniProtKB-SubCell"/>
</dbReference>
<dbReference type="GO" id="GO:0042910">
    <property type="term" value="F:xenobiotic transmembrane transporter activity"/>
    <property type="evidence" value="ECO:0007669"/>
    <property type="project" value="InterPro"/>
</dbReference>
<dbReference type="GO" id="GO:0006865">
    <property type="term" value="P:amino acid transport"/>
    <property type="evidence" value="ECO:0007669"/>
    <property type="project" value="UniProtKB-KW"/>
</dbReference>
<dbReference type="InterPro" id="IPR013936">
    <property type="entry name" value="CRT-like"/>
</dbReference>
<dbReference type="InterPro" id="IPR017258">
    <property type="entry name" value="Transprt_Chloroquine"/>
</dbReference>
<dbReference type="PANTHER" id="PTHR31326">
    <property type="entry name" value="PROTEIN CLT2, CHLOROPLASTIC"/>
    <property type="match status" value="1"/>
</dbReference>
<dbReference type="PANTHER" id="PTHR31326:SF1">
    <property type="entry name" value="PROTEIN CLT2, CHLOROPLASTIC"/>
    <property type="match status" value="1"/>
</dbReference>
<dbReference type="Pfam" id="PF08627">
    <property type="entry name" value="CRT-like"/>
    <property type="match status" value="1"/>
</dbReference>
<dbReference type="PIRSF" id="PIRSF037671">
    <property type="entry name" value="Transprt_Chloroquine_res"/>
    <property type="match status" value="1"/>
</dbReference>
<evidence type="ECO:0000250" key="1">
    <source>
        <dbReference type="UniProtKB" id="Q9N623"/>
    </source>
</evidence>
<evidence type="ECO:0000250" key="2">
    <source>
        <dbReference type="UniProtKB" id="W7FI62"/>
    </source>
</evidence>
<evidence type="ECO:0000255" key="3"/>
<evidence type="ECO:0000305" key="4"/>
<name>CRT_PLAKN</name>
<keyword id="KW-0029">Amino-acid transport</keyword>
<keyword id="KW-1015">Disulfide bond</keyword>
<keyword id="KW-0325">Glycoprotein</keyword>
<keyword id="KW-0472">Membrane</keyword>
<keyword id="KW-0812">Transmembrane</keyword>
<keyword id="KW-1133">Transmembrane helix</keyword>
<keyword id="KW-0813">Transport</keyword>
<keyword id="KW-0926">Vacuole</keyword>
<reference key="1">
    <citation type="journal article" date="2001" name="J. Infect. Dis.">
        <title>Evidence for different mechanisms of chloroquine resistance in 2 Plasmodium species that cause human malaria.</title>
        <authorList>
            <person name="Nomura T."/>
            <person name="Carlton J.M.-R."/>
            <person name="Baird J.K."/>
            <person name="del Portillo H.A."/>
            <person name="Fryauff D.J."/>
            <person name="Rathore D."/>
            <person name="Fidock D.A."/>
            <person name="Su X.-Z."/>
            <person name="Collins W.E."/>
            <person name="McCutchan T.F."/>
            <person name="Wootton J.C."/>
            <person name="Wellems T.E."/>
        </authorList>
    </citation>
    <scope>NUCLEOTIDE SEQUENCE [MRNA]</scope>
</reference>
<protein>
    <recommendedName>
        <fullName>Putative chloroquine resistance transporter</fullName>
    </recommendedName>
    <alternativeName>
        <fullName>Probable transporter cg10</fullName>
        <shortName>pkcg10</shortName>
    </alternativeName>
    <alternativeName>
        <fullName>pfcrt homolog</fullName>
    </alternativeName>
</protein>
<gene>
    <name evidence="4" type="primary">CRT</name>
    <name type="synonym">CG10</name>
</gene>
<comment type="function">
    <text evidence="1">Nutrient transporter (By similarity). Involved in maintaining the osmotic homeostasis of the digestive vacuole (By similarity).</text>
</comment>
<comment type="subcellular location">
    <subcellularLocation>
        <location evidence="1">Vacuole membrane</location>
        <topology evidence="3">Multi-pass membrane protein</topology>
    </subcellularLocation>
    <text evidence="1">Localizes to the parasite digestive vacuole, the site of chloroquine action.</text>
</comment>
<comment type="similarity">
    <text evidence="4">Belongs to the CRT-like transporter family.</text>
</comment>